<comment type="function">
    <text evidence="1">Responsible for the release of ribosomes from messenger RNA at the termination of protein biosynthesis. May increase the efficiency of translation by recycling ribosomes from one round of translation to another.</text>
</comment>
<comment type="subcellular location">
    <subcellularLocation>
        <location evidence="1">Cytoplasm</location>
    </subcellularLocation>
</comment>
<comment type="similarity">
    <text evidence="1">Belongs to the RRF family.</text>
</comment>
<reference key="1">
    <citation type="journal article" date="2003" name="Genome Res.">
        <title>Comparative complete genome sequence analysis of the amino acid replacements responsible for the thermostability of Corynebacterium efficiens.</title>
        <authorList>
            <person name="Nishio Y."/>
            <person name="Nakamura Y."/>
            <person name="Kawarabayasi Y."/>
            <person name="Usuda Y."/>
            <person name="Kimura E."/>
            <person name="Sugimoto S."/>
            <person name="Matsui K."/>
            <person name="Yamagishi A."/>
            <person name="Kikuchi H."/>
            <person name="Ikeo K."/>
            <person name="Gojobori T."/>
        </authorList>
    </citation>
    <scope>NUCLEOTIDE SEQUENCE [LARGE SCALE GENOMIC DNA]</scope>
    <source>
        <strain>DSM 44549 / YS-314 / AJ 12310 / JCM 11189 / NBRC 100395</strain>
    </source>
</reference>
<accession>Q8FP75</accession>
<keyword id="KW-0963">Cytoplasm</keyword>
<keyword id="KW-0648">Protein biosynthesis</keyword>
<keyword id="KW-1185">Reference proteome</keyword>
<evidence type="ECO:0000255" key="1">
    <source>
        <dbReference type="HAMAP-Rule" id="MF_00040"/>
    </source>
</evidence>
<sequence length="185" mass="20905">MIDEILFDSEERMSNTVEHTREDLITIRTGRANPAMFNGVLAEYYGVPTPITQMSSISVPEPRMLIIKPYEMSSMGVIENAIRNSDLGVNPTNDGQVLRVTIPQLTEERRRDMVKIAKGKGEDGKIAIRNVRRKGMEQLKKLQKDGEFGEDEVAAAEKELDKITAHYVEQVDEIVARKEAELMEV</sequence>
<protein>
    <recommendedName>
        <fullName evidence="1">Ribosome-recycling factor</fullName>
        <shortName evidence="1">RRF</shortName>
    </recommendedName>
    <alternativeName>
        <fullName evidence="1">Ribosome-releasing factor</fullName>
    </alternativeName>
</protein>
<dbReference type="EMBL" id="BA000035">
    <property type="protein sequence ID" value="BAC18720.1"/>
    <property type="molecule type" value="Genomic_DNA"/>
</dbReference>
<dbReference type="RefSeq" id="WP_006767912.1">
    <property type="nucleotide sequence ID" value="NC_004369.1"/>
</dbReference>
<dbReference type="SMR" id="Q8FP75"/>
<dbReference type="STRING" id="196164.gene:10742338"/>
<dbReference type="KEGG" id="cef:CE1910"/>
<dbReference type="eggNOG" id="COG0233">
    <property type="taxonomic scope" value="Bacteria"/>
</dbReference>
<dbReference type="HOGENOM" id="CLU_073981_2_0_11"/>
<dbReference type="OrthoDB" id="9804006at2"/>
<dbReference type="Proteomes" id="UP000001409">
    <property type="component" value="Chromosome"/>
</dbReference>
<dbReference type="GO" id="GO:0005737">
    <property type="term" value="C:cytoplasm"/>
    <property type="evidence" value="ECO:0007669"/>
    <property type="project" value="UniProtKB-SubCell"/>
</dbReference>
<dbReference type="GO" id="GO:0043023">
    <property type="term" value="F:ribosomal large subunit binding"/>
    <property type="evidence" value="ECO:0007669"/>
    <property type="project" value="TreeGrafter"/>
</dbReference>
<dbReference type="GO" id="GO:0006415">
    <property type="term" value="P:translational termination"/>
    <property type="evidence" value="ECO:0007669"/>
    <property type="project" value="UniProtKB-UniRule"/>
</dbReference>
<dbReference type="CDD" id="cd00520">
    <property type="entry name" value="RRF"/>
    <property type="match status" value="1"/>
</dbReference>
<dbReference type="FunFam" id="1.10.132.20:FF:000001">
    <property type="entry name" value="Ribosome-recycling factor"/>
    <property type="match status" value="1"/>
</dbReference>
<dbReference type="FunFam" id="3.30.1360.40:FF:000001">
    <property type="entry name" value="Ribosome-recycling factor"/>
    <property type="match status" value="1"/>
</dbReference>
<dbReference type="Gene3D" id="3.30.1360.40">
    <property type="match status" value="1"/>
</dbReference>
<dbReference type="Gene3D" id="1.10.132.20">
    <property type="entry name" value="Ribosome-recycling factor"/>
    <property type="match status" value="1"/>
</dbReference>
<dbReference type="HAMAP" id="MF_00040">
    <property type="entry name" value="RRF"/>
    <property type="match status" value="1"/>
</dbReference>
<dbReference type="InterPro" id="IPR002661">
    <property type="entry name" value="Ribosome_recyc_fac"/>
</dbReference>
<dbReference type="InterPro" id="IPR023584">
    <property type="entry name" value="Ribosome_recyc_fac_dom"/>
</dbReference>
<dbReference type="InterPro" id="IPR036191">
    <property type="entry name" value="RRF_sf"/>
</dbReference>
<dbReference type="NCBIfam" id="TIGR00496">
    <property type="entry name" value="frr"/>
    <property type="match status" value="1"/>
</dbReference>
<dbReference type="PANTHER" id="PTHR20982:SF3">
    <property type="entry name" value="MITOCHONDRIAL RIBOSOME RECYCLING FACTOR PSEUDO 1"/>
    <property type="match status" value="1"/>
</dbReference>
<dbReference type="PANTHER" id="PTHR20982">
    <property type="entry name" value="RIBOSOME RECYCLING FACTOR"/>
    <property type="match status" value="1"/>
</dbReference>
<dbReference type="Pfam" id="PF01765">
    <property type="entry name" value="RRF"/>
    <property type="match status" value="1"/>
</dbReference>
<dbReference type="SUPFAM" id="SSF55194">
    <property type="entry name" value="Ribosome recycling factor, RRF"/>
    <property type="match status" value="1"/>
</dbReference>
<feature type="chain" id="PRO_0000167448" description="Ribosome-recycling factor">
    <location>
        <begin position="1"/>
        <end position="185"/>
    </location>
</feature>
<organism>
    <name type="scientific">Corynebacterium efficiens (strain DSM 44549 / YS-314 / AJ 12310 / JCM 11189 / NBRC 100395)</name>
    <dbReference type="NCBI Taxonomy" id="196164"/>
    <lineage>
        <taxon>Bacteria</taxon>
        <taxon>Bacillati</taxon>
        <taxon>Actinomycetota</taxon>
        <taxon>Actinomycetes</taxon>
        <taxon>Mycobacteriales</taxon>
        <taxon>Corynebacteriaceae</taxon>
        <taxon>Corynebacterium</taxon>
    </lineage>
</organism>
<gene>
    <name evidence="1" type="primary">frr</name>
    <name type="ordered locus">CE1910</name>
</gene>
<proteinExistence type="inferred from homology"/>
<name>RRF_COREF</name>